<dbReference type="EC" id="6.5.1.2" evidence="1"/>
<dbReference type="EMBL" id="CP000859">
    <property type="protein sequence ID" value="ABW67519.1"/>
    <property type="molecule type" value="Genomic_DNA"/>
</dbReference>
<dbReference type="RefSeq" id="WP_012175135.1">
    <property type="nucleotide sequence ID" value="NC_009943.1"/>
</dbReference>
<dbReference type="SMR" id="A9A0L9"/>
<dbReference type="STRING" id="96561.Dole_1715"/>
<dbReference type="KEGG" id="dol:Dole_1715"/>
<dbReference type="eggNOG" id="COG0272">
    <property type="taxonomic scope" value="Bacteria"/>
</dbReference>
<dbReference type="HOGENOM" id="CLU_007764_2_1_7"/>
<dbReference type="OrthoDB" id="9759736at2"/>
<dbReference type="Proteomes" id="UP000008561">
    <property type="component" value="Chromosome"/>
</dbReference>
<dbReference type="GO" id="GO:0005829">
    <property type="term" value="C:cytosol"/>
    <property type="evidence" value="ECO:0007669"/>
    <property type="project" value="TreeGrafter"/>
</dbReference>
<dbReference type="GO" id="GO:0003677">
    <property type="term" value="F:DNA binding"/>
    <property type="evidence" value="ECO:0007669"/>
    <property type="project" value="InterPro"/>
</dbReference>
<dbReference type="GO" id="GO:0003911">
    <property type="term" value="F:DNA ligase (NAD+) activity"/>
    <property type="evidence" value="ECO:0007669"/>
    <property type="project" value="UniProtKB-UniRule"/>
</dbReference>
<dbReference type="GO" id="GO:0046872">
    <property type="term" value="F:metal ion binding"/>
    <property type="evidence" value="ECO:0007669"/>
    <property type="project" value="UniProtKB-KW"/>
</dbReference>
<dbReference type="GO" id="GO:0006281">
    <property type="term" value="P:DNA repair"/>
    <property type="evidence" value="ECO:0007669"/>
    <property type="project" value="UniProtKB-KW"/>
</dbReference>
<dbReference type="GO" id="GO:0006260">
    <property type="term" value="P:DNA replication"/>
    <property type="evidence" value="ECO:0007669"/>
    <property type="project" value="UniProtKB-KW"/>
</dbReference>
<dbReference type="CDD" id="cd17748">
    <property type="entry name" value="BRCT_DNA_ligase_like"/>
    <property type="match status" value="1"/>
</dbReference>
<dbReference type="CDD" id="cd00114">
    <property type="entry name" value="LIGANc"/>
    <property type="match status" value="1"/>
</dbReference>
<dbReference type="FunFam" id="1.10.150.20:FF:000007">
    <property type="entry name" value="DNA ligase"/>
    <property type="match status" value="1"/>
</dbReference>
<dbReference type="FunFam" id="1.10.287.610:FF:000002">
    <property type="entry name" value="DNA ligase"/>
    <property type="match status" value="1"/>
</dbReference>
<dbReference type="FunFam" id="2.40.50.140:FF:000012">
    <property type="entry name" value="DNA ligase"/>
    <property type="match status" value="1"/>
</dbReference>
<dbReference type="FunFam" id="3.30.470.30:FF:000001">
    <property type="entry name" value="DNA ligase"/>
    <property type="match status" value="1"/>
</dbReference>
<dbReference type="FunFam" id="3.40.50.10190:FF:000054">
    <property type="entry name" value="DNA ligase"/>
    <property type="match status" value="1"/>
</dbReference>
<dbReference type="Gene3D" id="6.20.10.30">
    <property type="match status" value="1"/>
</dbReference>
<dbReference type="Gene3D" id="1.10.150.20">
    <property type="entry name" value="5' to 3' exonuclease, C-terminal subdomain"/>
    <property type="match status" value="2"/>
</dbReference>
<dbReference type="Gene3D" id="3.40.50.10190">
    <property type="entry name" value="BRCT domain"/>
    <property type="match status" value="1"/>
</dbReference>
<dbReference type="Gene3D" id="3.30.470.30">
    <property type="entry name" value="DNA ligase/mRNA capping enzyme"/>
    <property type="match status" value="1"/>
</dbReference>
<dbReference type="Gene3D" id="1.10.287.610">
    <property type="entry name" value="Helix hairpin bin"/>
    <property type="match status" value="1"/>
</dbReference>
<dbReference type="Gene3D" id="2.40.50.140">
    <property type="entry name" value="Nucleic acid-binding proteins"/>
    <property type="match status" value="1"/>
</dbReference>
<dbReference type="HAMAP" id="MF_01588">
    <property type="entry name" value="DNA_ligase_A"/>
    <property type="match status" value="1"/>
</dbReference>
<dbReference type="InterPro" id="IPR001357">
    <property type="entry name" value="BRCT_dom"/>
</dbReference>
<dbReference type="InterPro" id="IPR036420">
    <property type="entry name" value="BRCT_dom_sf"/>
</dbReference>
<dbReference type="InterPro" id="IPR041663">
    <property type="entry name" value="DisA/LigA_HHH"/>
</dbReference>
<dbReference type="InterPro" id="IPR001679">
    <property type="entry name" value="DNA_ligase"/>
</dbReference>
<dbReference type="InterPro" id="IPR033136">
    <property type="entry name" value="DNA_ligase_CS"/>
</dbReference>
<dbReference type="InterPro" id="IPR013839">
    <property type="entry name" value="DNAligase_adenylation"/>
</dbReference>
<dbReference type="InterPro" id="IPR013840">
    <property type="entry name" value="DNAligase_N"/>
</dbReference>
<dbReference type="InterPro" id="IPR003583">
    <property type="entry name" value="Hlx-hairpin-Hlx_DNA-bd_motif"/>
</dbReference>
<dbReference type="InterPro" id="IPR012340">
    <property type="entry name" value="NA-bd_OB-fold"/>
</dbReference>
<dbReference type="InterPro" id="IPR004150">
    <property type="entry name" value="NAD_DNA_ligase_OB"/>
</dbReference>
<dbReference type="InterPro" id="IPR010994">
    <property type="entry name" value="RuvA_2-like"/>
</dbReference>
<dbReference type="InterPro" id="IPR004149">
    <property type="entry name" value="Znf_DNAligase_C4"/>
</dbReference>
<dbReference type="NCBIfam" id="TIGR00575">
    <property type="entry name" value="dnlj"/>
    <property type="match status" value="1"/>
</dbReference>
<dbReference type="NCBIfam" id="NF005932">
    <property type="entry name" value="PRK07956.1"/>
    <property type="match status" value="1"/>
</dbReference>
<dbReference type="PANTHER" id="PTHR23389">
    <property type="entry name" value="CHROMOSOME TRANSMISSION FIDELITY FACTOR 18"/>
    <property type="match status" value="1"/>
</dbReference>
<dbReference type="PANTHER" id="PTHR23389:SF9">
    <property type="entry name" value="DNA LIGASE"/>
    <property type="match status" value="1"/>
</dbReference>
<dbReference type="Pfam" id="PF00533">
    <property type="entry name" value="BRCT"/>
    <property type="match status" value="1"/>
</dbReference>
<dbReference type="Pfam" id="PF01653">
    <property type="entry name" value="DNA_ligase_aden"/>
    <property type="match status" value="1"/>
</dbReference>
<dbReference type="Pfam" id="PF03120">
    <property type="entry name" value="DNA_ligase_OB"/>
    <property type="match status" value="1"/>
</dbReference>
<dbReference type="Pfam" id="PF03119">
    <property type="entry name" value="DNA_ligase_ZBD"/>
    <property type="match status" value="1"/>
</dbReference>
<dbReference type="Pfam" id="PF12826">
    <property type="entry name" value="HHH_2"/>
    <property type="match status" value="1"/>
</dbReference>
<dbReference type="Pfam" id="PF14520">
    <property type="entry name" value="HHH_5"/>
    <property type="match status" value="1"/>
</dbReference>
<dbReference type="Pfam" id="PF22745">
    <property type="entry name" value="Nlig-Ia"/>
    <property type="match status" value="1"/>
</dbReference>
<dbReference type="PIRSF" id="PIRSF001604">
    <property type="entry name" value="LigA"/>
    <property type="match status" value="1"/>
</dbReference>
<dbReference type="SMART" id="SM00292">
    <property type="entry name" value="BRCT"/>
    <property type="match status" value="1"/>
</dbReference>
<dbReference type="SMART" id="SM00278">
    <property type="entry name" value="HhH1"/>
    <property type="match status" value="2"/>
</dbReference>
<dbReference type="SMART" id="SM00532">
    <property type="entry name" value="LIGANc"/>
    <property type="match status" value="1"/>
</dbReference>
<dbReference type="SUPFAM" id="SSF52113">
    <property type="entry name" value="BRCT domain"/>
    <property type="match status" value="1"/>
</dbReference>
<dbReference type="SUPFAM" id="SSF56091">
    <property type="entry name" value="DNA ligase/mRNA capping enzyme, catalytic domain"/>
    <property type="match status" value="1"/>
</dbReference>
<dbReference type="SUPFAM" id="SSF50249">
    <property type="entry name" value="Nucleic acid-binding proteins"/>
    <property type="match status" value="1"/>
</dbReference>
<dbReference type="SUPFAM" id="SSF47781">
    <property type="entry name" value="RuvA domain 2-like"/>
    <property type="match status" value="1"/>
</dbReference>
<dbReference type="PROSITE" id="PS50172">
    <property type="entry name" value="BRCT"/>
    <property type="match status" value="1"/>
</dbReference>
<dbReference type="PROSITE" id="PS01056">
    <property type="entry name" value="DNA_LIGASE_N2"/>
    <property type="match status" value="1"/>
</dbReference>
<feature type="chain" id="PRO_0000380365" description="DNA ligase">
    <location>
        <begin position="1"/>
        <end position="682"/>
    </location>
</feature>
<feature type="domain" description="BRCT" evidence="1">
    <location>
        <begin position="601"/>
        <end position="682"/>
    </location>
</feature>
<feature type="active site" description="N6-AMP-lysine intermediate" evidence="1">
    <location>
        <position position="121"/>
    </location>
</feature>
<feature type="binding site" evidence="1">
    <location>
        <begin position="38"/>
        <end position="42"/>
    </location>
    <ligand>
        <name>NAD(+)</name>
        <dbReference type="ChEBI" id="CHEBI:57540"/>
    </ligand>
</feature>
<feature type="binding site" evidence="1">
    <location>
        <begin position="87"/>
        <end position="88"/>
    </location>
    <ligand>
        <name>NAD(+)</name>
        <dbReference type="ChEBI" id="CHEBI:57540"/>
    </ligand>
</feature>
<feature type="binding site" evidence="1">
    <location>
        <position position="119"/>
    </location>
    <ligand>
        <name>NAD(+)</name>
        <dbReference type="ChEBI" id="CHEBI:57540"/>
    </ligand>
</feature>
<feature type="binding site" evidence="1">
    <location>
        <position position="142"/>
    </location>
    <ligand>
        <name>NAD(+)</name>
        <dbReference type="ChEBI" id="CHEBI:57540"/>
    </ligand>
</feature>
<feature type="binding site" evidence="1">
    <location>
        <position position="181"/>
    </location>
    <ligand>
        <name>NAD(+)</name>
        <dbReference type="ChEBI" id="CHEBI:57540"/>
    </ligand>
</feature>
<feature type="binding site" evidence="1">
    <location>
        <position position="298"/>
    </location>
    <ligand>
        <name>NAD(+)</name>
        <dbReference type="ChEBI" id="CHEBI:57540"/>
    </ligand>
</feature>
<feature type="binding site" evidence="1">
    <location>
        <position position="322"/>
    </location>
    <ligand>
        <name>NAD(+)</name>
        <dbReference type="ChEBI" id="CHEBI:57540"/>
    </ligand>
</feature>
<feature type="binding site" evidence="1">
    <location>
        <position position="416"/>
    </location>
    <ligand>
        <name>Zn(2+)</name>
        <dbReference type="ChEBI" id="CHEBI:29105"/>
    </ligand>
</feature>
<feature type="binding site" evidence="1">
    <location>
        <position position="419"/>
    </location>
    <ligand>
        <name>Zn(2+)</name>
        <dbReference type="ChEBI" id="CHEBI:29105"/>
    </ligand>
</feature>
<feature type="binding site" evidence="1">
    <location>
        <position position="434"/>
    </location>
    <ligand>
        <name>Zn(2+)</name>
        <dbReference type="ChEBI" id="CHEBI:29105"/>
    </ligand>
</feature>
<feature type="binding site" evidence="1">
    <location>
        <position position="439"/>
    </location>
    <ligand>
        <name>Zn(2+)</name>
        <dbReference type="ChEBI" id="CHEBI:29105"/>
    </ligand>
</feature>
<organism>
    <name type="scientific">Desulfosudis oleivorans (strain DSM 6200 / JCM 39069 / Hxd3)</name>
    <name type="common">Desulfococcus oleovorans</name>
    <dbReference type="NCBI Taxonomy" id="96561"/>
    <lineage>
        <taxon>Bacteria</taxon>
        <taxon>Pseudomonadati</taxon>
        <taxon>Thermodesulfobacteriota</taxon>
        <taxon>Desulfobacteria</taxon>
        <taxon>Desulfobacterales</taxon>
        <taxon>Desulfosudaceae</taxon>
        <taxon>Desulfosudis</taxon>
    </lineage>
</organism>
<reference key="1">
    <citation type="submission" date="2007-10" db="EMBL/GenBank/DDBJ databases">
        <title>Complete sequence of Desulfococcus oleovorans Hxd3.</title>
        <authorList>
            <consortium name="US DOE Joint Genome Institute"/>
            <person name="Copeland A."/>
            <person name="Lucas S."/>
            <person name="Lapidus A."/>
            <person name="Barry K."/>
            <person name="Glavina del Rio T."/>
            <person name="Dalin E."/>
            <person name="Tice H."/>
            <person name="Pitluck S."/>
            <person name="Kiss H."/>
            <person name="Brettin T."/>
            <person name="Bruce D."/>
            <person name="Detter J.C."/>
            <person name="Han C."/>
            <person name="Schmutz J."/>
            <person name="Larimer F."/>
            <person name="Land M."/>
            <person name="Hauser L."/>
            <person name="Kyrpides N."/>
            <person name="Kim E."/>
            <person name="Wawrik B."/>
            <person name="Richardson P."/>
        </authorList>
    </citation>
    <scope>NUCLEOTIDE SEQUENCE [LARGE SCALE GENOMIC DNA]</scope>
    <source>
        <strain>DSM 6200 / JCM 39069 / Hxd3</strain>
    </source>
</reference>
<gene>
    <name evidence="1" type="primary">ligA</name>
    <name type="ordered locus">Dole_1715</name>
</gene>
<name>DNLJ_DESOH</name>
<accession>A9A0L9</accession>
<keyword id="KW-0227">DNA damage</keyword>
<keyword id="KW-0234">DNA repair</keyword>
<keyword id="KW-0235">DNA replication</keyword>
<keyword id="KW-0436">Ligase</keyword>
<keyword id="KW-0460">Magnesium</keyword>
<keyword id="KW-0464">Manganese</keyword>
<keyword id="KW-0479">Metal-binding</keyword>
<keyword id="KW-0520">NAD</keyword>
<keyword id="KW-1185">Reference proteome</keyword>
<keyword id="KW-0862">Zinc</keyword>
<comment type="function">
    <text evidence="1">DNA ligase that catalyzes the formation of phosphodiester linkages between 5'-phosphoryl and 3'-hydroxyl groups in double-stranded DNA using NAD as a coenzyme and as the energy source for the reaction. It is essential for DNA replication and repair of damaged DNA.</text>
</comment>
<comment type="catalytic activity">
    <reaction evidence="1">
        <text>NAD(+) + (deoxyribonucleotide)n-3'-hydroxyl + 5'-phospho-(deoxyribonucleotide)m = (deoxyribonucleotide)n+m + AMP + beta-nicotinamide D-nucleotide.</text>
        <dbReference type="EC" id="6.5.1.2"/>
    </reaction>
</comment>
<comment type="cofactor">
    <cofactor evidence="1">
        <name>Mg(2+)</name>
        <dbReference type="ChEBI" id="CHEBI:18420"/>
    </cofactor>
    <cofactor evidence="1">
        <name>Mn(2+)</name>
        <dbReference type="ChEBI" id="CHEBI:29035"/>
    </cofactor>
</comment>
<comment type="similarity">
    <text evidence="1">Belongs to the NAD-dependent DNA ligase family. LigA subfamily.</text>
</comment>
<sequence>MHNTLDKSEAKERVTFLRNELHRHNHLYYIKDAPEISDAEYDRLFRELAELEALHPDLADPASPTARVGAPPTGDLATVTRTIPMLSISNAFADEELFKFDERVRRSLQTGDPVTYLAEPKLDGTAVELVYEKGRLVMAATRGDGVTGEVITPNARTIGSVPLHLTGDAVPMPNLLEVRGEVVMTKEGFEKLNALRLERDEPLFANARNAAAGSLRQLDSRVTASRPLTLIAYGIGRFSEIDAISTQHEIVTRLADFGFKTNSHVRWDLDIKGVIDFYRFLEGIRPSLPYDIDGMVVKVDRLDFQRTLGATSRSPRWVIAYKFAASQETTRLVAIDVQVGRTGALTPVALLEPVTIGGVTVSRATLHNEDEIARKDIRVGDAVLVQRAGDVIPEVVQVITGRRTGNETPFQMPATCPVCGTPVVREPSEAVTRCVNAACPAQVKERIKHFAAKGAFDIDGLGDKLVDQLVDRGMIASYADLFTLRVEDLESLDRMGFKSAQNLVAAIEKSRHITFDAFLYGLGMRHVGAHVATLLARAFPGIDQLAEAALAGQLNSIDGIGGVIAESVKNFFSNPENRQTVDSLINHGVALQFPEKEAATGHEMPLAGKTFVLTGTLEKMTRDQARQRIEAAGGKVTGSVSSRTDYVVAGEAPGSKRDKAEALGVAILDEAGLLSLLEPGER</sequence>
<protein>
    <recommendedName>
        <fullName evidence="1">DNA ligase</fullName>
        <ecNumber evidence="1">6.5.1.2</ecNumber>
    </recommendedName>
    <alternativeName>
        <fullName evidence="1">Polydeoxyribonucleotide synthase [NAD(+)]</fullName>
    </alternativeName>
</protein>
<proteinExistence type="inferred from homology"/>
<evidence type="ECO:0000255" key="1">
    <source>
        <dbReference type="HAMAP-Rule" id="MF_01588"/>
    </source>
</evidence>